<dbReference type="EMBL" id="CP000806">
    <property type="protein sequence ID" value="ACB51192.1"/>
    <property type="molecule type" value="Genomic_DNA"/>
</dbReference>
<dbReference type="RefSeq" id="WP_009545655.1">
    <property type="nucleotide sequence ID" value="NC_010546.1"/>
</dbReference>
<dbReference type="SMR" id="B1WZP0"/>
<dbReference type="STRING" id="43989.cce_1842"/>
<dbReference type="KEGG" id="cyt:cce_1842"/>
<dbReference type="eggNOG" id="COG0779">
    <property type="taxonomic scope" value="Bacteria"/>
</dbReference>
<dbReference type="HOGENOM" id="CLU_070525_2_1_3"/>
<dbReference type="OrthoDB" id="9805006at2"/>
<dbReference type="Proteomes" id="UP000001203">
    <property type="component" value="Chromosome circular"/>
</dbReference>
<dbReference type="GO" id="GO:0005829">
    <property type="term" value="C:cytosol"/>
    <property type="evidence" value="ECO:0007669"/>
    <property type="project" value="TreeGrafter"/>
</dbReference>
<dbReference type="GO" id="GO:0000028">
    <property type="term" value="P:ribosomal small subunit assembly"/>
    <property type="evidence" value="ECO:0007669"/>
    <property type="project" value="TreeGrafter"/>
</dbReference>
<dbReference type="GO" id="GO:0006412">
    <property type="term" value="P:translation"/>
    <property type="evidence" value="ECO:0007669"/>
    <property type="project" value="TreeGrafter"/>
</dbReference>
<dbReference type="CDD" id="cd01734">
    <property type="entry name" value="YlxS_C"/>
    <property type="match status" value="1"/>
</dbReference>
<dbReference type="FunFam" id="3.30.300.70:FF:000001">
    <property type="entry name" value="Ribosome maturation factor RimP"/>
    <property type="match status" value="1"/>
</dbReference>
<dbReference type="Gene3D" id="2.30.30.180">
    <property type="entry name" value="Ribosome maturation factor RimP, C-terminal domain"/>
    <property type="match status" value="1"/>
</dbReference>
<dbReference type="Gene3D" id="3.30.300.70">
    <property type="entry name" value="RimP-like superfamily, N-terminal"/>
    <property type="match status" value="1"/>
</dbReference>
<dbReference type="HAMAP" id="MF_01077">
    <property type="entry name" value="RimP"/>
    <property type="match status" value="1"/>
</dbReference>
<dbReference type="InterPro" id="IPR003728">
    <property type="entry name" value="Ribosome_maturation_RimP"/>
</dbReference>
<dbReference type="InterPro" id="IPR028998">
    <property type="entry name" value="RimP_C"/>
</dbReference>
<dbReference type="InterPro" id="IPR036847">
    <property type="entry name" value="RimP_C_sf"/>
</dbReference>
<dbReference type="InterPro" id="IPR028989">
    <property type="entry name" value="RimP_N"/>
</dbReference>
<dbReference type="InterPro" id="IPR035956">
    <property type="entry name" value="RimP_N_sf"/>
</dbReference>
<dbReference type="NCBIfam" id="NF000935">
    <property type="entry name" value="PRK00092.3-3"/>
    <property type="match status" value="1"/>
</dbReference>
<dbReference type="PANTHER" id="PTHR33867">
    <property type="entry name" value="RIBOSOME MATURATION FACTOR RIMP"/>
    <property type="match status" value="1"/>
</dbReference>
<dbReference type="PANTHER" id="PTHR33867:SF1">
    <property type="entry name" value="RIBOSOME MATURATION FACTOR RIMP"/>
    <property type="match status" value="1"/>
</dbReference>
<dbReference type="Pfam" id="PF17384">
    <property type="entry name" value="DUF150_C"/>
    <property type="match status" value="1"/>
</dbReference>
<dbReference type="Pfam" id="PF02576">
    <property type="entry name" value="RimP_N"/>
    <property type="match status" value="1"/>
</dbReference>
<dbReference type="SUPFAM" id="SSF74942">
    <property type="entry name" value="YhbC-like, C-terminal domain"/>
    <property type="match status" value="1"/>
</dbReference>
<dbReference type="SUPFAM" id="SSF75420">
    <property type="entry name" value="YhbC-like, N-terminal domain"/>
    <property type="match status" value="1"/>
</dbReference>
<name>RIMP_CROS5</name>
<feature type="chain" id="PRO_0000384635" description="Ribosome maturation factor RimP">
    <location>
        <begin position="1"/>
        <end position="151"/>
    </location>
</feature>
<proteinExistence type="inferred from homology"/>
<organism>
    <name type="scientific">Crocosphaera subtropica (strain ATCC 51142 / BH68)</name>
    <name type="common">Cyanothece sp. (strain ATCC 51142)</name>
    <dbReference type="NCBI Taxonomy" id="43989"/>
    <lineage>
        <taxon>Bacteria</taxon>
        <taxon>Bacillati</taxon>
        <taxon>Cyanobacteriota</taxon>
        <taxon>Cyanophyceae</taxon>
        <taxon>Oscillatoriophycideae</taxon>
        <taxon>Chroococcales</taxon>
        <taxon>Aphanothecaceae</taxon>
        <taxon>Crocosphaera</taxon>
        <taxon>Crocosphaera subtropica</taxon>
    </lineage>
</organism>
<accession>B1WZP0</accession>
<sequence>MTHPLIPQIIDLATPIVEEMGLDVVEVVFQTNKRPPVLRVDIRNPASDTSLNDCEQVSRALEAVLDETAIMPGAYVLEISSPGISRYLNSERDFIAFKGFEVNIATNPPYKDKKEWRGRLQGRDEKAVYLNRKGRAIAIPCAVITKVQLAD</sequence>
<comment type="function">
    <text evidence="1">Required for maturation of 30S ribosomal subunits.</text>
</comment>
<comment type="subcellular location">
    <subcellularLocation>
        <location evidence="1">Cytoplasm</location>
    </subcellularLocation>
</comment>
<comment type="similarity">
    <text evidence="1">Belongs to the RimP family.</text>
</comment>
<gene>
    <name evidence="1" type="primary">rimP</name>
    <name type="ordered locus">cce_1842</name>
</gene>
<keyword id="KW-0963">Cytoplasm</keyword>
<keyword id="KW-1185">Reference proteome</keyword>
<keyword id="KW-0690">Ribosome biogenesis</keyword>
<evidence type="ECO:0000255" key="1">
    <source>
        <dbReference type="HAMAP-Rule" id="MF_01077"/>
    </source>
</evidence>
<protein>
    <recommendedName>
        <fullName evidence="1">Ribosome maturation factor RimP</fullName>
    </recommendedName>
</protein>
<reference key="1">
    <citation type="journal article" date="2008" name="Proc. Natl. Acad. Sci. U.S.A.">
        <title>The genome of Cyanothece 51142, a unicellular diazotrophic cyanobacterium important in the marine nitrogen cycle.</title>
        <authorList>
            <person name="Welsh E.A."/>
            <person name="Liberton M."/>
            <person name="Stoeckel J."/>
            <person name="Loh T."/>
            <person name="Elvitigala T."/>
            <person name="Wang C."/>
            <person name="Wollam A."/>
            <person name="Fulton R.S."/>
            <person name="Clifton S.W."/>
            <person name="Jacobs J.M."/>
            <person name="Aurora R."/>
            <person name="Ghosh B.K."/>
            <person name="Sherman L.A."/>
            <person name="Smith R.D."/>
            <person name="Wilson R.K."/>
            <person name="Pakrasi H.B."/>
        </authorList>
    </citation>
    <scope>NUCLEOTIDE SEQUENCE [LARGE SCALE GENOMIC DNA]</scope>
    <source>
        <strain>ATCC 51142 / BH68</strain>
    </source>
</reference>